<organism>
    <name type="scientific">Mus musculus</name>
    <name type="common">Mouse</name>
    <dbReference type="NCBI Taxonomy" id="10090"/>
    <lineage>
        <taxon>Eukaryota</taxon>
        <taxon>Metazoa</taxon>
        <taxon>Chordata</taxon>
        <taxon>Craniata</taxon>
        <taxon>Vertebrata</taxon>
        <taxon>Euteleostomi</taxon>
        <taxon>Mammalia</taxon>
        <taxon>Eutheria</taxon>
        <taxon>Euarchontoglires</taxon>
        <taxon>Glires</taxon>
        <taxon>Rodentia</taxon>
        <taxon>Myomorpha</taxon>
        <taxon>Muroidea</taxon>
        <taxon>Muridae</taxon>
        <taxon>Murinae</taxon>
        <taxon>Mus</taxon>
        <taxon>Mus</taxon>
    </lineage>
</organism>
<dbReference type="EC" id="3.1.3.95" evidence="2"/>
<dbReference type="EMBL" id="AL645910">
    <property type="protein sequence ID" value="CAI35184.1"/>
    <property type="status" value="ALT_SEQ"/>
    <property type="molecule type" value="Genomic_DNA"/>
</dbReference>
<dbReference type="EMBL" id="BC032166">
    <property type="protein sequence ID" value="AAH32166.1"/>
    <property type="molecule type" value="mRNA"/>
</dbReference>
<dbReference type="RefSeq" id="NP_001360826.1">
    <molecule id="Q8K296-1"/>
    <property type="nucleotide sequence ID" value="NM_001373897.1"/>
</dbReference>
<dbReference type="RefSeq" id="XP_006514910.1">
    <property type="nucleotide sequence ID" value="XM_006514847.3"/>
</dbReference>
<dbReference type="SMR" id="Q8K296"/>
<dbReference type="BioGRID" id="216649">
    <property type="interactions" value="8"/>
</dbReference>
<dbReference type="FunCoup" id="Q8K296">
    <property type="interactions" value="2123"/>
</dbReference>
<dbReference type="IntAct" id="Q8K296">
    <property type="interactions" value="1"/>
</dbReference>
<dbReference type="MINT" id="Q8K296"/>
<dbReference type="STRING" id="10090.ENSMUSP00000105569"/>
<dbReference type="GlyGen" id="Q8K296">
    <property type="glycosylation" value="1 site, 1 N-linked glycan (1 site)"/>
</dbReference>
<dbReference type="iPTMnet" id="Q8K296"/>
<dbReference type="PhosphoSitePlus" id="Q8K296"/>
<dbReference type="jPOST" id="Q8K296"/>
<dbReference type="PaxDb" id="10090-ENSMUSP00000122422"/>
<dbReference type="ProteomicsDB" id="286075">
    <molecule id="Q8K296-1"/>
</dbReference>
<dbReference type="ProteomicsDB" id="286076">
    <molecule id="Q8K296-2"/>
</dbReference>
<dbReference type="Pumba" id="Q8K296"/>
<dbReference type="DNASU" id="74302"/>
<dbReference type="Ensembl" id="ENSMUST00000123506.9">
    <molecule id="Q8K296-1"/>
    <property type="protein sequence ID" value="ENSMUSP00000122422.3"/>
    <property type="gene ID" value="ENSMUSG00000034354.19"/>
</dbReference>
<dbReference type="Ensembl" id="ENSMUST00000249891.1">
    <molecule id="Q8K296-1"/>
    <property type="protein sequence ID" value="ENSMUSP00000159988.1"/>
    <property type="gene ID" value="ENSMUSG00000034354.19"/>
</dbReference>
<dbReference type="GeneID" id="74302"/>
<dbReference type="UCSC" id="uc007huy.1">
    <molecule id="Q8K296-1"/>
    <property type="organism name" value="mouse"/>
</dbReference>
<dbReference type="AGR" id="MGI:1921552"/>
<dbReference type="MGI" id="MGI:1921552">
    <property type="gene designation" value="Mtmr3"/>
</dbReference>
<dbReference type="eggNOG" id="KOG4471">
    <property type="taxonomic scope" value="Eukaryota"/>
</dbReference>
<dbReference type="GeneTree" id="ENSGT00940000157272"/>
<dbReference type="InParanoid" id="Q8K296"/>
<dbReference type="PhylomeDB" id="Q8K296"/>
<dbReference type="TreeFam" id="TF315197"/>
<dbReference type="Reactome" id="R-MMU-1632852">
    <property type="pathway name" value="Macroautophagy"/>
</dbReference>
<dbReference type="Reactome" id="R-MMU-1660499">
    <property type="pathway name" value="Synthesis of PIPs at the plasma membrane"/>
</dbReference>
<dbReference type="BioGRID-ORCS" id="74302">
    <property type="hits" value="6 hits in 81 CRISPR screens"/>
</dbReference>
<dbReference type="ChiTaRS" id="Mtmr3">
    <property type="organism name" value="mouse"/>
</dbReference>
<dbReference type="PRO" id="PR:Q8K296"/>
<dbReference type="Proteomes" id="UP000000589">
    <property type="component" value="Chromosome 11"/>
</dbReference>
<dbReference type="RNAct" id="Q8K296">
    <property type="molecule type" value="protein"/>
</dbReference>
<dbReference type="GO" id="GO:0005737">
    <property type="term" value="C:cytoplasm"/>
    <property type="evidence" value="ECO:0000250"/>
    <property type="project" value="UniProtKB"/>
</dbReference>
<dbReference type="GO" id="GO:0005829">
    <property type="term" value="C:cytosol"/>
    <property type="evidence" value="ECO:0007669"/>
    <property type="project" value="UniProtKB-SubCell"/>
</dbReference>
<dbReference type="GO" id="GO:0016020">
    <property type="term" value="C:membrane"/>
    <property type="evidence" value="ECO:0007669"/>
    <property type="project" value="UniProtKB-SubCell"/>
</dbReference>
<dbReference type="GO" id="GO:0052629">
    <property type="term" value="F:phosphatidylinositol-3,5-bisphosphate 3-phosphatase activity"/>
    <property type="evidence" value="ECO:0000250"/>
    <property type="project" value="UniProtKB"/>
</dbReference>
<dbReference type="GO" id="GO:0004438">
    <property type="term" value="F:phosphatidylinositol-3-phosphate phosphatase activity"/>
    <property type="evidence" value="ECO:0000250"/>
    <property type="project" value="UniProtKB"/>
</dbReference>
<dbReference type="GO" id="GO:0004725">
    <property type="term" value="F:protein tyrosine phosphatase activity"/>
    <property type="evidence" value="ECO:0007669"/>
    <property type="project" value="UniProtKB-EC"/>
</dbReference>
<dbReference type="GO" id="GO:0008270">
    <property type="term" value="F:zinc ion binding"/>
    <property type="evidence" value="ECO:0007669"/>
    <property type="project" value="UniProtKB-KW"/>
</dbReference>
<dbReference type="GO" id="GO:0046856">
    <property type="term" value="P:phosphatidylinositol dephosphorylation"/>
    <property type="evidence" value="ECO:0000250"/>
    <property type="project" value="UniProtKB"/>
</dbReference>
<dbReference type="CDD" id="cd15732">
    <property type="entry name" value="FYVE_MTMR3"/>
    <property type="match status" value="1"/>
</dbReference>
<dbReference type="CDD" id="cd13341">
    <property type="entry name" value="PH-GRAM_MTMR3"/>
    <property type="match status" value="1"/>
</dbReference>
<dbReference type="CDD" id="cd14586">
    <property type="entry name" value="PTP-MTMR3"/>
    <property type="match status" value="1"/>
</dbReference>
<dbReference type="FunFam" id="3.30.40.10:FF:000073">
    <property type="entry name" value="myotubularin-related protein 4 isoform X2"/>
    <property type="match status" value="1"/>
</dbReference>
<dbReference type="Gene3D" id="3.90.190.10">
    <property type="entry name" value="Protein tyrosine phosphatase superfamily"/>
    <property type="match status" value="1"/>
</dbReference>
<dbReference type="Gene3D" id="3.30.40.10">
    <property type="entry name" value="Zinc/RING finger domain, C3HC4 (zinc finger)"/>
    <property type="match status" value="1"/>
</dbReference>
<dbReference type="InterPro" id="IPR035888">
    <property type="entry name" value="MTMR3_PH-GRAM"/>
</dbReference>
<dbReference type="InterPro" id="IPR046352">
    <property type="entry name" value="MTMR3_PTP"/>
</dbReference>
<dbReference type="InterPro" id="IPR030564">
    <property type="entry name" value="Myotubularin"/>
</dbReference>
<dbReference type="InterPro" id="IPR010569">
    <property type="entry name" value="Myotubularin-like_Pase_dom"/>
</dbReference>
<dbReference type="InterPro" id="IPR029021">
    <property type="entry name" value="Prot-tyrosine_phosphatase-like"/>
</dbReference>
<dbReference type="InterPro" id="IPR016130">
    <property type="entry name" value="Tyr_Pase_AS"/>
</dbReference>
<dbReference type="InterPro" id="IPR003595">
    <property type="entry name" value="Tyr_Pase_cat"/>
</dbReference>
<dbReference type="InterPro" id="IPR000306">
    <property type="entry name" value="Znf_FYVE"/>
</dbReference>
<dbReference type="InterPro" id="IPR017455">
    <property type="entry name" value="Znf_FYVE-rel"/>
</dbReference>
<dbReference type="InterPro" id="IPR011011">
    <property type="entry name" value="Znf_FYVE_PHD"/>
</dbReference>
<dbReference type="InterPro" id="IPR013083">
    <property type="entry name" value="Znf_RING/FYVE/PHD"/>
</dbReference>
<dbReference type="PANTHER" id="PTHR10807">
    <property type="entry name" value="MYOTUBULARIN-RELATED"/>
    <property type="match status" value="1"/>
</dbReference>
<dbReference type="PANTHER" id="PTHR10807:SF66">
    <property type="entry name" value="MYOTUBULARIN-RELATED PROTEIN 3"/>
    <property type="match status" value="1"/>
</dbReference>
<dbReference type="Pfam" id="PF01363">
    <property type="entry name" value="FYVE"/>
    <property type="match status" value="1"/>
</dbReference>
<dbReference type="Pfam" id="PF06602">
    <property type="entry name" value="Myotub-related"/>
    <property type="match status" value="1"/>
</dbReference>
<dbReference type="SMART" id="SM00064">
    <property type="entry name" value="FYVE"/>
    <property type="match status" value="1"/>
</dbReference>
<dbReference type="SMART" id="SM00404">
    <property type="entry name" value="PTPc_motif"/>
    <property type="match status" value="1"/>
</dbReference>
<dbReference type="SUPFAM" id="SSF52799">
    <property type="entry name" value="(Phosphotyrosine protein) phosphatases II"/>
    <property type="match status" value="1"/>
</dbReference>
<dbReference type="SUPFAM" id="SSF57903">
    <property type="entry name" value="FYVE/PHD zinc finger"/>
    <property type="match status" value="1"/>
</dbReference>
<dbReference type="SUPFAM" id="SSF50729">
    <property type="entry name" value="PH domain-like"/>
    <property type="match status" value="1"/>
</dbReference>
<dbReference type="PROSITE" id="PS51339">
    <property type="entry name" value="PPASE_MYOTUBULARIN"/>
    <property type="match status" value="1"/>
</dbReference>
<dbReference type="PROSITE" id="PS00383">
    <property type="entry name" value="TYR_PHOSPHATASE_1"/>
    <property type="match status" value="1"/>
</dbReference>
<dbReference type="PROSITE" id="PS50178">
    <property type="entry name" value="ZF_FYVE"/>
    <property type="match status" value="1"/>
</dbReference>
<evidence type="ECO:0000250" key="1">
    <source>
        <dbReference type="UniProtKB" id="Q13614"/>
    </source>
</evidence>
<evidence type="ECO:0000250" key="2">
    <source>
        <dbReference type="UniProtKB" id="Q13615"/>
    </source>
</evidence>
<evidence type="ECO:0000255" key="3"/>
<evidence type="ECO:0000255" key="4">
    <source>
        <dbReference type="PROSITE-ProRule" id="PRU00091"/>
    </source>
</evidence>
<evidence type="ECO:0000255" key="5">
    <source>
        <dbReference type="PROSITE-ProRule" id="PRU00669"/>
    </source>
</evidence>
<evidence type="ECO:0000255" key="6">
    <source>
        <dbReference type="PROSITE-ProRule" id="PRU10044"/>
    </source>
</evidence>
<evidence type="ECO:0000256" key="7">
    <source>
        <dbReference type="SAM" id="MobiDB-lite"/>
    </source>
</evidence>
<evidence type="ECO:0000303" key="8">
    <source>
    </source>
</evidence>
<evidence type="ECO:0000305" key="9"/>
<evidence type="ECO:0000312" key="10">
    <source>
        <dbReference type="MGI" id="MGI:1921552"/>
    </source>
</evidence>
<evidence type="ECO:0007744" key="11">
    <source>
    </source>
</evidence>
<protein>
    <recommendedName>
        <fullName evidence="2">Phosphatidylinositol-3,5-bisphosphate 3-phosphatase MTMR3</fullName>
        <ecNumber evidence="2">3.1.3.95</ecNumber>
    </recommendedName>
    <alternativeName>
        <fullName evidence="10">Myotubularin-related protein 3</fullName>
    </alternativeName>
    <alternativeName>
        <fullName evidence="2">Phosphatidylinositol-3,5-bisphosphate 3-phosphatase</fullName>
    </alternativeName>
    <alternativeName>
        <fullName evidence="2">Phosphatidylinositol-3-phosphate phosphatase</fullName>
    </alternativeName>
</protein>
<gene>
    <name evidence="10" type="primary">Mtmr3</name>
</gene>
<feature type="chain" id="PRO_0000094937" description="Phosphatidylinositol-3,5-bisphosphate 3-phosphatase MTMR3">
    <location>
        <begin position="1"/>
        <end position="1196"/>
    </location>
</feature>
<feature type="domain" description="Myotubularin phosphatase" evidence="5">
    <location>
        <begin position="155"/>
        <end position="576"/>
    </location>
</feature>
<feature type="zinc finger region" description="FYVE-type" evidence="4">
    <location>
        <begin position="1117"/>
        <end position="1177"/>
    </location>
</feature>
<feature type="region of interest" description="Disordered" evidence="7">
    <location>
        <begin position="587"/>
        <end position="612"/>
    </location>
</feature>
<feature type="region of interest" description="Disordered" evidence="7">
    <location>
        <begin position="697"/>
        <end position="719"/>
    </location>
</feature>
<feature type="region of interest" description="Disordered" evidence="7">
    <location>
        <begin position="855"/>
        <end position="900"/>
    </location>
</feature>
<feature type="region of interest" description="Disordered" evidence="7">
    <location>
        <begin position="993"/>
        <end position="1019"/>
    </location>
</feature>
<feature type="coiled-coil region" evidence="3">
    <location>
        <begin position="1027"/>
        <end position="1060"/>
    </location>
</feature>
<feature type="compositionally biased region" description="Pro residues" evidence="7">
    <location>
        <begin position="593"/>
        <end position="603"/>
    </location>
</feature>
<feature type="compositionally biased region" description="Polar residues" evidence="7">
    <location>
        <begin position="993"/>
        <end position="1008"/>
    </location>
</feature>
<feature type="active site" description="Phosphocysteine intermediate" evidence="6">
    <location>
        <position position="413"/>
    </location>
</feature>
<feature type="binding site" evidence="1">
    <location>
        <position position="326"/>
    </location>
    <ligand>
        <name>a 1,2-diacyl-sn-glycero-3-phospho-(1D-myo-inositol-3,5-bisphosphate)</name>
        <dbReference type="ChEBI" id="CHEBI:57923"/>
    </ligand>
</feature>
<feature type="binding site" evidence="1">
    <location>
        <position position="326"/>
    </location>
    <ligand>
        <name>a 1,2-diacyl-sn-glycero-3-phospho-(1D-myo-inositol-3-phosphate)</name>
        <dbReference type="ChEBI" id="CHEBI:58088"/>
    </ligand>
</feature>
<feature type="binding site" evidence="1">
    <location>
        <position position="351"/>
    </location>
    <ligand>
        <name>a 1,2-diacyl-sn-glycero-3-phospho-(1D-myo-inositol-3,5-bisphosphate)</name>
        <dbReference type="ChEBI" id="CHEBI:57923"/>
    </ligand>
</feature>
<feature type="binding site" evidence="1">
    <location>
        <position position="351"/>
    </location>
    <ligand>
        <name>a 1,2-diacyl-sn-glycero-3-phospho-(1D-myo-inositol-3-phosphate)</name>
        <dbReference type="ChEBI" id="CHEBI:58088"/>
    </ligand>
</feature>
<feature type="binding site" evidence="1">
    <location>
        <position position="352"/>
    </location>
    <ligand>
        <name>a 1,2-diacyl-sn-glycero-3-phospho-(1D-myo-inositol-3,5-bisphosphate)</name>
        <dbReference type="ChEBI" id="CHEBI:57923"/>
    </ligand>
</feature>
<feature type="binding site" evidence="1">
    <location>
        <position position="352"/>
    </location>
    <ligand>
        <name>a 1,2-diacyl-sn-glycero-3-phospho-(1D-myo-inositol-3-phosphate)</name>
        <dbReference type="ChEBI" id="CHEBI:58088"/>
    </ligand>
</feature>
<feature type="binding site" evidence="1">
    <location>
        <position position="414"/>
    </location>
    <ligand>
        <name>a 1,2-diacyl-sn-glycero-3-phospho-(1D-myo-inositol-3,5-bisphosphate)</name>
        <dbReference type="ChEBI" id="CHEBI:57923"/>
    </ligand>
</feature>
<feature type="binding site" evidence="1">
    <location>
        <position position="414"/>
    </location>
    <ligand>
        <name>a 1,2-diacyl-sn-glycero-3-phospho-(1D-myo-inositol-3-phosphate)</name>
        <dbReference type="ChEBI" id="CHEBI:58088"/>
    </ligand>
</feature>
<feature type="binding site" evidence="1">
    <location>
        <position position="415"/>
    </location>
    <ligand>
        <name>a 1,2-diacyl-sn-glycero-3-phospho-(1D-myo-inositol-3,5-bisphosphate)</name>
        <dbReference type="ChEBI" id="CHEBI:57923"/>
    </ligand>
</feature>
<feature type="binding site" evidence="1">
    <location>
        <position position="415"/>
    </location>
    <ligand>
        <name>a 1,2-diacyl-sn-glycero-3-phospho-(1D-myo-inositol-3-phosphate)</name>
        <dbReference type="ChEBI" id="CHEBI:58088"/>
    </ligand>
</feature>
<feature type="binding site" evidence="1">
    <location>
        <position position="416"/>
    </location>
    <ligand>
        <name>a 1,2-diacyl-sn-glycero-3-phospho-(1D-myo-inositol-3,5-bisphosphate)</name>
        <dbReference type="ChEBI" id="CHEBI:57923"/>
    </ligand>
</feature>
<feature type="binding site" evidence="1">
    <location>
        <position position="416"/>
    </location>
    <ligand>
        <name>a 1,2-diacyl-sn-glycero-3-phospho-(1D-myo-inositol-3-phosphate)</name>
        <dbReference type="ChEBI" id="CHEBI:58088"/>
    </ligand>
</feature>
<feature type="binding site" evidence="1">
    <location>
        <position position="417"/>
    </location>
    <ligand>
        <name>a 1,2-diacyl-sn-glycero-3-phospho-(1D-myo-inositol-3,5-bisphosphate)</name>
        <dbReference type="ChEBI" id="CHEBI:57923"/>
    </ligand>
</feature>
<feature type="binding site" evidence="1">
    <location>
        <position position="417"/>
    </location>
    <ligand>
        <name>a 1,2-diacyl-sn-glycero-3-phospho-(1D-myo-inositol-3-phosphate)</name>
        <dbReference type="ChEBI" id="CHEBI:58088"/>
    </ligand>
</feature>
<feature type="binding site" evidence="1">
    <location>
        <position position="418"/>
    </location>
    <ligand>
        <name>a 1,2-diacyl-sn-glycero-3-phospho-(1D-myo-inositol-3,5-bisphosphate)</name>
        <dbReference type="ChEBI" id="CHEBI:57923"/>
    </ligand>
</feature>
<feature type="binding site" evidence="1">
    <location>
        <position position="418"/>
    </location>
    <ligand>
        <name>a 1,2-diacyl-sn-glycero-3-phospho-(1D-myo-inositol-3-phosphate)</name>
        <dbReference type="ChEBI" id="CHEBI:58088"/>
    </ligand>
</feature>
<feature type="binding site" evidence="1">
    <location>
        <position position="419"/>
    </location>
    <ligand>
        <name>a 1,2-diacyl-sn-glycero-3-phospho-(1D-myo-inositol-3,5-bisphosphate)</name>
        <dbReference type="ChEBI" id="CHEBI:57923"/>
    </ligand>
</feature>
<feature type="binding site" evidence="1">
    <location>
        <position position="419"/>
    </location>
    <ligand>
        <name>a 1,2-diacyl-sn-glycero-3-phospho-(1D-myo-inositol-3-phosphate)</name>
        <dbReference type="ChEBI" id="CHEBI:58088"/>
    </ligand>
</feature>
<feature type="binding site" evidence="1">
    <location>
        <position position="455"/>
    </location>
    <ligand>
        <name>a 1,2-diacyl-sn-glycero-3-phospho-(1D-myo-inositol-3,5-bisphosphate)</name>
        <dbReference type="ChEBI" id="CHEBI:57923"/>
    </ligand>
</feature>
<feature type="binding site" evidence="1">
    <location>
        <position position="459"/>
    </location>
    <ligand>
        <name>a 1,2-diacyl-sn-glycero-3-phospho-(1D-myo-inositol-3,5-bisphosphate)</name>
        <dbReference type="ChEBI" id="CHEBI:57923"/>
    </ligand>
</feature>
<feature type="binding site" evidence="1">
    <location>
        <position position="459"/>
    </location>
    <ligand>
        <name>a 1,2-diacyl-sn-glycero-3-phospho-(1D-myo-inositol-3-phosphate)</name>
        <dbReference type="ChEBI" id="CHEBI:58088"/>
    </ligand>
</feature>
<feature type="binding site" evidence="4">
    <location>
        <position position="1123"/>
    </location>
    <ligand>
        <name>Zn(2+)</name>
        <dbReference type="ChEBI" id="CHEBI:29105"/>
        <label>1</label>
    </ligand>
</feature>
<feature type="binding site" evidence="4">
    <location>
        <position position="1126"/>
    </location>
    <ligand>
        <name>Zn(2+)</name>
        <dbReference type="ChEBI" id="CHEBI:29105"/>
        <label>1</label>
    </ligand>
</feature>
<feature type="binding site" evidence="4">
    <location>
        <position position="1139"/>
    </location>
    <ligand>
        <name>Zn(2+)</name>
        <dbReference type="ChEBI" id="CHEBI:29105"/>
        <label>2</label>
    </ligand>
</feature>
<feature type="binding site" evidence="4">
    <location>
        <position position="1142"/>
    </location>
    <ligand>
        <name>Zn(2+)</name>
        <dbReference type="ChEBI" id="CHEBI:29105"/>
        <label>2</label>
    </ligand>
</feature>
<feature type="binding site" evidence="4">
    <location>
        <position position="1147"/>
    </location>
    <ligand>
        <name>Zn(2+)</name>
        <dbReference type="ChEBI" id="CHEBI:29105"/>
        <label>1</label>
    </ligand>
</feature>
<feature type="binding site" evidence="4">
    <location>
        <position position="1150"/>
    </location>
    <ligand>
        <name>Zn(2+)</name>
        <dbReference type="ChEBI" id="CHEBI:29105"/>
        <label>1</label>
    </ligand>
</feature>
<feature type="binding site" evidence="4">
    <location>
        <position position="1169"/>
    </location>
    <ligand>
        <name>Zn(2+)</name>
        <dbReference type="ChEBI" id="CHEBI:29105"/>
        <label>2</label>
    </ligand>
</feature>
<feature type="binding site" evidence="4">
    <location>
        <position position="1172"/>
    </location>
    <ligand>
        <name>Zn(2+)</name>
        <dbReference type="ChEBI" id="CHEBI:29105"/>
        <label>2</label>
    </ligand>
</feature>
<feature type="modified residue" description="Phosphoserine" evidence="11">
    <location>
        <position position="8"/>
    </location>
</feature>
<feature type="modified residue" description="Phosphoserine" evidence="11">
    <location>
        <position position="613"/>
    </location>
</feature>
<feature type="modified residue" description="Phosphoserine" evidence="2">
    <location>
        <position position="633"/>
    </location>
</feature>
<feature type="modified residue" description="Phosphoserine" evidence="2">
    <location>
        <position position="647"/>
    </location>
</feature>
<feature type="modified residue" description="Phosphoserine" evidence="2">
    <location>
        <position position="651"/>
    </location>
</feature>
<feature type="modified residue" description="Phosphoserine" evidence="2">
    <location>
        <position position="907"/>
    </location>
</feature>
<feature type="modified residue" description="Phosphoserine" evidence="11">
    <location>
        <position position="1062"/>
    </location>
</feature>
<feature type="splice variant" id="VSP_026027" description="In isoform 2." evidence="8">
    <location>
        <begin position="1076"/>
        <end position="1196"/>
    </location>
</feature>
<feature type="sequence conflict" description="In Ref. 2; AAH32166." evidence="9" ref="2">
    <original>R</original>
    <variation>S</variation>
    <location>
        <position position="782"/>
    </location>
</feature>
<feature type="sequence conflict" description="In Ref. 2; AAH32166." evidence="9" ref="2">
    <original>T</original>
    <variation>V</variation>
    <location>
        <position position="1074"/>
    </location>
</feature>
<accession>Q8K296</accession>
<accession>Q5NCA4</accession>
<proteinExistence type="evidence at protein level"/>
<sequence>MDEEMRHSLECIQANQIFPRKQLIREDENLQVPFLELHGESTEYVGRAEEAIIALSNYRLHIKFKESLVNVPLQLIESVECRDIFQLHLTCKDCKVIRCQFPTFEQCQDWLKRLNNAIRPPGKIEDLFSFAYHAWCMEVYASEKEQHGDLCRPGEHVTSRFKNEVERMGFDMNNAWRISNINEKYKLCGSYPQELIVPAWITDKELESVAGFRSWKRIPAVIYRHQSNGAVIARCGQPEVSWWGWRNADDEHLVQSVARACASDSQSSISKVSTRNSCRDFPNAGDLSDVEFDSSLSNTSGAESLALQPQKLLILDARSYAAAVANRAKGGGCECPEYYPNCEVVFMGMANIHSIRRSFQSLRLLCTQMPDPGNWLSALESTKWLHHLSVLLKSALLVVHAVDRDQRPVLVHCSDGWDRTPQIVALAKLLLDPYYRTIEGFQVLVEMEWLDFGHKFADRCGHGEDSDDLNERCPVFLQWLDCVHQLQRQFPCSFEFNEAFLVKLVQHTYSCLFGTFLCNNAKERGEKQTQERTCSVWSLLRAGNKAFKNLLYSSQSEAVLYPVCHVRNLMLWSAVYLPCPSPSTPTDDSCAPYPVPGTSPDEPPLSRLPKTRSFDNLTTTCENMVPLASRRSSDPSLNEKWQEHGRSLELSSFASAGEEVPAMDSLRKPSRLLGGAELSVAAGVAEGQMENILQEATKEESGVEEPTHRGHTEVPEVKEEAPLAKESSMAAEGPVVLYQEPQLDDATLRSHQGPSLSLFSQGIPEHQDGHNVLSSSLQAPLRGEDSQEVPVEQPQVENIAEDRENVAPAVPVDAKVGLGISQSSSLLPSQVPFETRGPHINNSVHMLLEDKVKSESGPQLHHRPCPASSGRFSGKDMLPVAPEPRSAERPQWDSVLHRTSSPGNTLSLLQAPCALPLDKCRQGIVCNGALETENKASEQPAGFDTLQKYPTPNGHCANWEAGRSKDSLSHQLSATSCSSAHLYSRNLHHKWLNSHSGRPSTTSSPDQPSRSHLDDDGMPVYTDTIQQRLRQIESGHQQEVETLKKQVQELKSRLESQYLTSSLRFNGDFGDEVTSIPDSESNLDQNCVSRCSTEIFSEASWEQVDKQDTEMTRWLPDHLAAHCYACDSAFWLASRKHHCRNCGNVFCSSCCNQKVPVPSQQLFEPSRVCKSCYSSLHPTSSSIDLELDKPIAATSN</sequence>
<keyword id="KW-0025">Alternative splicing</keyword>
<keyword id="KW-0175">Coiled coil</keyword>
<keyword id="KW-0963">Cytoplasm</keyword>
<keyword id="KW-0378">Hydrolase</keyword>
<keyword id="KW-0443">Lipid metabolism</keyword>
<keyword id="KW-0472">Membrane</keyword>
<keyword id="KW-0479">Metal-binding</keyword>
<keyword id="KW-0597">Phosphoprotein</keyword>
<keyword id="KW-1185">Reference proteome</keyword>
<keyword id="KW-0862">Zinc</keyword>
<keyword id="KW-0863">Zinc-finger</keyword>
<comment type="function">
    <text evidence="2">Lipid phosphatase that specifically dephosphorylates the D-3 position of phosphatidylinositol 3-phosphate and phosphatidylinositol 3,5-bisphosphate, generating phosphatidylinositol and phosphatidylinositol 5-phosphate. Decreases the levels of phosphatidylinositol 3-phosphate, a phospholipid found in cell membranes where it acts as key regulator of both cell signaling and intracellular membrane traffic. Could also have a molecular sequestering/adapter activity and regulate biological processes independently of its phosphatase activity. It includes the regulation of midbody abscission during mitotic cytokinesis.</text>
</comment>
<comment type="catalytic activity">
    <reaction evidence="2">
        <text>a 1,2-diacyl-sn-glycero-3-phospho-(1D-myo-inositol-3,5-bisphosphate) + H2O = a 1,2-diacyl-sn-glycero-3-phospho-(1D-myo-inositol-5-phosphate) + phosphate</text>
        <dbReference type="Rhea" id="RHEA:39019"/>
        <dbReference type="ChEBI" id="CHEBI:15377"/>
        <dbReference type="ChEBI" id="CHEBI:43474"/>
        <dbReference type="ChEBI" id="CHEBI:57795"/>
        <dbReference type="ChEBI" id="CHEBI:57923"/>
        <dbReference type="EC" id="3.1.3.95"/>
    </reaction>
</comment>
<comment type="catalytic activity">
    <reaction evidence="2">
        <text>a 1,2-diacyl-sn-glycero-3-phospho-(1D-myo-inositol-3-phosphate) + H2O = a 1,2-diacyl-sn-glycero-3-phospho-(1D-myo-inositol) + phosphate</text>
        <dbReference type="Rhea" id="RHEA:12316"/>
        <dbReference type="ChEBI" id="CHEBI:15377"/>
        <dbReference type="ChEBI" id="CHEBI:43474"/>
        <dbReference type="ChEBI" id="CHEBI:57880"/>
        <dbReference type="ChEBI" id="CHEBI:58088"/>
    </reaction>
</comment>
<comment type="catalytic activity">
    <reaction evidence="2">
        <text>1,2-dihexadecanoyl-sn-glycero-3-phospho-(1D-myo-inositol-3-phosphate) + H2O = 1,2-dihexadecanoyl-sn-glycero-3-phospho-(1D-myo-inositol) + phosphate</text>
        <dbReference type="Rhea" id="RHEA:45640"/>
        <dbReference type="ChEBI" id="CHEBI:15377"/>
        <dbReference type="ChEBI" id="CHEBI:43474"/>
        <dbReference type="ChEBI" id="CHEBI:72835"/>
        <dbReference type="ChEBI" id="CHEBI:78995"/>
    </reaction>
</comment>
<comment type="catalytic activity">
    <reaction evidence="2">
        <text>1,2-dioctanoyl-sn-glycero-3-phospho-(1-D-myo-inositol-3-phosphate) + H2O = 1,2-dioctanoyl-sn-glycero-3-phospho-(1D-myo-inositol) + phosphate</text>
        <dbReference type="Rhea" id="RHEA:42328"/>
        <dbReference type="ChEBI" id="CHEBI:15377"/>
        <dbReference type="ChEBI" id="CHEBI:43474"/>
        <dbReference type="ChEBI" id="CHEBI:65221"/>
        <dbReference type="ChEBI" id="CHEBI:78934"/>
    </reaction>
</comment>
<comment type="catalytic activity">
    <reaction evidence="2">
        <text>1,2-dihexadecanoyl-sn-glycero-3-phospho-(1D-myo-inositol-3,5-phosphate) + H2O = 1,2-dihexadecanoyl-sn-glycero-3-phospho-(1D-myo-inositol-5-phosphate) + phosphate</text>
        <dbReference type="Rhea" id="RHEA:45636"/>
        <dbReference type="ChEBI" id="CHEBI:15377"/>
        <dbReference type="ChEBI" id="CHEBI:43474"/>
        <dbReference type="ChEBI" id="CHEBI:78994"/>
        <dbReference type="ChEBI" id="CHEBI:84968"/>
    </reaction>
</comment>
<comment type="subunit">
    <text evidence="2">Forms heterodimers with MTMR4 that recruit both CEP55 and PLK1; occurs during early mitosis, regulates the phosphorylation of CEP55 by PLK1 and its recruitment to the midbody where it mediates cell abscission.</text>
</comment>
<comment type="subcellular location">
    <subcellularLocation>
        <location evidence="2">Cytoplasm</location>
        <location evidence="2">Cytosol</location>
    </subcellularLocation>
    <subcellularLocation>
        <location evidence="2">Membrane</location>
        <topology evidence="2">Peripheral membrane protein</topology>
    </subcellularLocation>
</comment>
<comment type="alternative products">
    <event type="alternative splicing"/>
    <isoform>
        <id>Q8K296-1</id>
        <name>1</name>
        <sequence type="displayed"/>
    </isoform>
    <isoform>
        <id>Q8K296-2</id>
        <name>2</name>
        <sequence type="described" ref="VSP_026027"/>
    </isoform>
</comment>
<comment type="domain">
    <text evidence="2">The coiled coil domain mediates the interaction between MTMR3 and MTMR4. It is essential to bring together CEP55 and PLK1 during mitotic abscission.</text>
</comment>
<comment type="similarity">
    <text evidence="9">Belongs to the protein-tyrosine phosphatase family. Non-receptor class myotubularin subfamily.</text>
</comment>
<comment type="sequence caution" evidence="9">
    <conflict type="erroneous gene model prediction">
        <sequence resource="EMBL-CDS" id="CAI35184"/>
    </conflict>
</comment>
<reference key="1">
    <citation type="journal article" date="2009" name="PLoS Biol.">
        <title>Lineage-specific biology revealed by a finished genome assembly of the mouse.</title>
        <authorList>
            <person name="Church D.M."/>
            <person name="Goodstadt L."/>
            <person name="Hillier L.W."/>
            <person name="Zody M.C."/>
            <person name="Goldstein S."/>
            <person name="She X."/>
            <person name="Bult C.J."/>
            <person name="Agarwala R."/>
            <person name="Cherry J.L."/>
            <person name="DiCuccio M."/>
            <person name="Hlavina W."/>
            <person name="Kapustin Y."/>
            <person name="Meric P."/>
            <person name="Maglott D."/>
            <person name="Birtle Z."/>
            <person name="Marques A.C."/>
            <person name="Graves T."/>
            <person name="Zhou S."/>
            <person name="Teague B."/>
            <person name="Potamousis K."/>
            <person name="Churas C."/>
            <person name="Place M."/>
            <person name="Herschleb J."/>
            <person name="Runnheim R."/>
            <person name="Forrest D."/>
            <person name="Amos-Landgraf J."/>
            <person name="Schwartz D.C."/>
            <person name="Cheng Z."/>
            <person name="Lindblad-Toh K."/>
            <person name="Eichler E.E."/>
            <person name="Ponting C.P."/>
        </authorList>
    </citation>
    <scope>NUCLEOTIDE SEQUENCE [LARGE SCALE GENOMIC DNA]</scope>
    <source>
        <strain>C57BL/6J</strain>
    </source>
</reference>
<reference key="2">
    <citation type="journal article" date="2004" name="Genome Res.">
        <title>The status, quality, and expansion of the NIH full-length cDNA project: the Mammalian Gene Collection (MGC).</title>
        <authorList>
            <consortium name="The MGC Project Team"/>
        </authorList>
    </citation>
    <scope>NUCLEOTIDE SEQUENCE [LARGE SCALE MRNA] (ISOFORM 2)</scope>
</reference>
<reference key="3">
    <citation type="journal article" date="2007" name="Proc. Natl. Acad. Sci. U.S.A.">
        <title>Large-scale phosphorylation analysis of mouse liver.</title>
        <authorList>
            <person name="Villen J."/>
            <person name="Beausoleil S.A."/>
            <person name="Gerber S.A."/>
            <person name="Gygi S.P."/>
        </authorList>
    </citation>
    <scope>IDENTIFICATION BY MASS SPECTROMETRY [LARGE SCALE ANALYSIS]</scope>
    <source>
        <tissue>Liver</tissue>
    </source>
</reference>
<reference key="4">
    <citation type="journal article" date="2010" name="Cell">
        <title>A tissue-specific atlas of mouse protein phosphorylation and expression.</title>
        <authorList>
            <person name="Huttlin E.L."/>
            <person name="Jedrychowski M.P."/>
            <person name="Elias J.E."/>
            <person name="Goswami T."/>
            <person name="Rad R."/>
            <person name="Beausoleil S.A."/>
            <person name="Villen J."/>
            <person name="Haas W."/>
            <person name="Sowa M.E."/>
            <person name="Gygi S.P."/>
        </authorList>
    </citation>
    <scope>PHOSPHORYLATION [LARGE SCALE ANALYSIS] AT SER-8; SER-613 AND SER-1062</scope>
    <scope>IDENTIFICATION BY MASS SPECTROMETRY [LARGE SCALE ANALYSIS]</scope>
    <source>
        <tissue>Brain</tissue>
        <tissue>Brown adipose tissue</tissue>
        <tissue>Heart</tissue>
        <tissue>Kidney</tissue>
        <tissue>Liver</tissue>
        <tissue>Lung</tissue>
        <tissue>Pancreas</tissue>
        <tissue>Spleen</tissue>
        <tissue>Testis</tissue>
    </source>
</reference>
<name>MTMR3_MOUSE</name>